<protein>
    <recommendedName>
        <fullName evidence="1">Putative membrane protein insertion efficiency factor</fullName>
    </recommendedName>
</protein>
<evidence type="ECO:0000255" key="1">
    <source>
        <dbReference type="HAMAP-Rule" id="MF_00386"/>
    </source>
</evidence>
<dbReference type="EMBL" id="AP008231">
    <property type="protein sequence ID" value="BAD80662.1"/>
    <property type="molecule type" value="Genomic_DNA"/>
</dbReference>
<dbReference type="KEGG" id="syc:syc2472_c"/>
<dbReference type="eggNOG" id="COG0759">
    <property type="taxonomic scope" value="Bacteria"/>
</dbReference>
<dbReference type="Proteomes" id="UP000001175">
    <property type="component" value="Chromosome"/>
</dbReference>
<dbReference type="GO" id="GO:0005886">
    <property type="term" value="C:plasma membrane"/>
    <property type="evidence" value="ECO:0007669"/>
    <property type="project" value="UniProtKB-SubCell"/>
</dbReference>
<dbReference type="HAMAP" id="MF_00386">
    <property type="entry name" value="UPF0161_YidD"/>
    <property type="match status" value="1"/>
</dbReference>
<dbReference type="InterPro" id="IPR002696">
    <property type="entry name" value="Membr_insert_effic_factor_YidD"/>
</dbReference>
<dbReference type="NCBIfam" id="TIGR00278">
    <property type="entry name" value="membrane protein insertion efficiency factor YidD"/>
    <property type="match status" value="1"/>
</dbReference>
<dbReference type="PANTHER" id="PTHR33383">
    <property type="entry name" value="MEMBRANE PROTEIN INSERTION EFFICIENCY FACTOR-RELATED"/>
    <property type="match status" value="1"/>
</dbReference>
<dbReference type="PANTHER" id="PTHR33383:SF1">
    <property type="entry name" value="MEMBRANE PROTEIN INSERTION EFFICIENCY FACTOR-RELATED"/>
    <property type="match status" value="1"/>
</dbReference>
<dbReference type="Pfam" id="PF01809">
    <property type="entry name" value="YidD"/>
    <property type="match status" value="1"/>
</dbReference>
<dbReference type="SMART" id="SM01234">
    <property type="entry name" value="Haemolytic"/>
    <property type="match status" value="1"/>
</dbReference>
<reference key="1">
    <citation type="journal article" date="2007" name="Photosyn. Res.">
        <title>Complete nucleotide sequence of the freshwater unicellular cyanobacterium Synechococcus elongatus PCC 6301 chromosome: gene content and organization.</title>
        <authorList>
            <person name="Sugita C."/>
            <person name="Ogata K."/>
            <person name="Shikata M."/>
            <person name="Jikuya H."/>
            <person name="Takano J."/>
            <person name="Furumichi M."/>
            <person name="Kanehisa M."/>
            <person name="Omata T."/>
            <person name="Sugiura M."/>
            <person name="Sugita M."/>
        </authorList>
    </citation>
    <scope>NUCLEOTIDE SEQUENCE [LARGE SCALE GENOMIC DNA]</scope>
    <source>
        <strain>ATCC 27144 / PCC 6301 / SAUG 1402/1</strain>
    </source>
</reference>
<gene>
    <name type="ordered locus">syc2472_c</name>
</gene>
<organism>
    <name type="scientific">Synechococcus sp. (strain ATCC 27144 / PCC 6301 / SAUG 1402/1)</name>
    <name type="common">Anacystis nidulans</name>
    <dbReference type="NCBI Taxonomy" id="269084"/>
    <lineage>
        <taxon>Bacteria</taxon>
        <taxon>Bacillati</taxon>
        <taxon>Cyanobacteriota</taxon>
        <taxon>Cyanophyceae</taxon>
        <taxon>Synechococcales</taxon>
        <taxon>Synechococcaceae</taxon>
        <taxon>Synechococcus</taxon>
    </lineage>
</organism>
<keyword id="KW-0997">Cell inner membrane</keyword>
<keyword id="KW-1003">Cell membrane</keyword>
<keyword id="KW-0472">Membrane</keyword>
<comment type="function">
    <text evidence="1">Could be involved in insertion of integral membrane proteins into the membrane.</text>
</comment>
<comment type="subcellular location">
    <subcellularLocation>
        <location evidence="1">Cell inner membrane</location>
        <topology evidence="1">Peripheral membrane protein</topology>
        <orientation evidence="1">Cytoplasmic side</orientation>
    </subcellularLocation>
</comment>
<comment type="similarity">
    <text evidence="1">Belongs to the UPF0161 family.</text>
</comment>
<accession>Q5MZ58</accession>
<feature type="chain" id="PRO_0000253185" description="Putative membrane protein insertion efficiency factor">
    <location>
        <begin position="1"/>
        <end position="82"/>
    </location>
</feature>
<sequence length="82" mass="9258">MKLLLLALIQFYRRWISPLTPASCRFYPTCSQYGLEAIDRFGPLKGSWLTLCRILRCHPFHPGGYDPVPPLPSCSCGKSPCD</sequence>
<proteinExistence type="inferred from homology"/>
<name>YIDD_SYNP6</name>